<protein>
    <recommendedName>
        <fullName evidence="1">ATP-dependent dethiobiotin synthetase BioD</fullName>
        <ecNumber evidence="1">6.3.3.3</ecNumber>
    </recommendedName>
    <alternativeName>
        <fullName evidence="1">DTB synthetase</fullName>
        <shortName evidence="1">DTBS</shortName>
    </alternativeName>
    <alternativeName>
        <fullName evidence="1">Dethiobiotin synthase</fullName>
    </alternativeName>
</protein>
<organism>
    <name type="scientific">Burkholderia mallei (strain ATCC 23344)</name>
    <dbReference type="NCBI Taxonomy" id="243160"/>
    <lineage>
        <taxon>Bacteria</taxon>
        <taxon>Pseudomonadati</taxon>
        <taxon>Pseudomonadota</taxon>
        <taxon>Betaproteobacteria</taxon>
        <taxon>Burkholderiales</taxon>
        <taxon>Burkholderiaceae</taxon>
        <taxon>Burkholderia</taxon>
        <taxon>pseudomallei group</taxon>
    </lineage>
</organism>
<reference key="1">
    <citation type="journal article" date="2004" name="Proc. Natl. Acad. Sci. U.S.A.">
        <title>Structural flexibility in the Burkholderia mallei genome.</title>
        <authorList>
            <person name="Nierman W.C."/>
            <person name="DeShazer D."/>
            <person name="Kim H.S."/>
            <person name="Tettelin H."/>
            <person name="Nelson K.E."/>
            <person name="Feldblyum T.V."/>
            <person name="Ulrich R.L."/>
            <person name="Ronning C.M."/>
            <person name="Brinkac L.M."/>
            <person name="Daugherty S.C."/>
            <person name="Davidsen T.D."/>
            <person name="DeBoy R.T."/>
            <person name="Dimitrov G."/>
            <person name="Dodson R.J."/>
            <person name="Durkin A.S."/>
            <person name="Gwinn M.L."/>
            <person name="Haft D.H."/>
            <person name="Khouri H.M."/>
            <person name="Kolonay J.F."/>
            <person name="Madupu R."/>
            <person name="Mohammoud Y."/>
            <person name="Nelson W.C."/>
            <person name="Radune D."/>
            <person name="Romero C.M."/>
            <person name="Sarria S."/>
            <person name="Selengut J."/>
            <person name="Shamblin C."/>
            <person name="Sullivan S.A."/>
            <person name="White O."/>
            <person name="Yu Y."/>
            <person name="Zafar N."/>
            <person name="Zhou L."/>
            <person name="Fraser C.M."/>
        </authorList>
    </citation>
    <scope>NUCLEOTIDE SEQUENCE [LARGE SCALE GENOMIC DNA]</scope>
    <source>
        <strain>ATCC 23344</strain>
    </source>
</reference>
<keyword id="KW-0067">ATP-binding</keyword>
<keyword id="KW-0093">Biotin biosynthesis</keyword>
<keyword id="KW-0963">Cytoplasm</keyword>
<keyword id="KW-0436">Ligase</keyword>
<keyword id="KW-0460">Magnesium</keyword>
<keyword id="KW-0479">Metal-binding</keyword>
<keyword id="KW-0547">Nucleotide-binding</keyword>
<keyword id="KW-1185">Reference proteome</keyword>
<accession>Q62MX0</accession>
<evidence type="ECO:0000255" key="1">
    <source>
        <dbReference type="HAMAP-Rule" id="MF_00336"/>
    </source>
</evidence>
<gene>
    <name evidence="1" type="primary">bioD</name>
    <name type="ordered locus">BMA0102</name>
</gene>
<comment type="function">
    <text evidence="1">Catalyzes a mechanistically unusual reaction, the ATP-dependent insertion of CO2 between the N7 and N8 nitrogen atoms of 7,8-diaminopelargonic acid (DAPA, also called 7,8-diammoniononanoate) to form a ureido ring.</text>
</comment>
<comment type="catalytic activity">
    <reaction evidence="1">
        <text>(7R,8S)-7,8-diammoniononanoate + CO2 + ATP = (4R,5S)-dethiobiotin + ADP + phosphate + 3 H(+)</text>
        <dbReference type="Rhea" id="RHEA:15805"/>
        <dbReference type="ChEBI" id="CHEBI:15378"/>
        <dbReference type="ChEBI" id="CHEBI:16526"/>
        <dbReference type="ChEBI" id="CHEBI:30616"/>
        <dbReference type="ChEBI" id="CHEBI:43474"/>
        <dbReference type="ChEBI" id="CHEBI:149469"/>
        <dbReference type="ChEBI" id="CHEBI:149473"/>
        <dbReference type="ChEBI" id="CHEBI:456216"/>
        <dbReference type="EC" id="6.3.3.3"/>
    </reaction>
</comment>
<comment type="cofactor">
    <cofactor evidence="1">
        <name>Mg(2+)</name>
        <dbReference type="ChEBI" id="CHEBI:18420"/>
    </cofactor>
</comment>
<comment type="pathway">
    <text evidence="1">Cofactor biosynthesis; biotin biosynthesis; biotin from 7,8-diaminononanoate: step 1/2.</text>
</comment>
<comment type="subunit">
    <text evidence="1">Homodimer.</text>
</comment>
<comment type="subcellular location">
    <subcellularLocation>
        <location evidence="1">Cytoplasm</location>
    </subcellularLocation>
</comment>
<comment type="similarity">
    <text evidence="1">Belongs to the dethiobiotin synthetase family.</text>
</comment>
<feature type="chain" id="PRO_0000302489" description="ATP-dependent dethiobiotin synthetase BioD">
    <location>
        <begin position="1"/>
        <end position="240"/>
    </location>
</feature>
<feature type="active site" evidence="1">
    <location>
        <position position="40"/>
    </location>
</feature>
<feature type="binding site" evidence="1">
    <location>
        <begin position="15"/>
        <end position="20"/>
    </location>
    <ligand>
        <name>ATP</name>
        <dbReference type="ChEBI" id="CHEBI:30616"/>
    </ligand>
</feature>
<feature type="binding site" evidence="1">
    <location>
        <position position="19"/>
    </location>
    <ligand>
        <name>Mg(2+)</name>
        <dbReference type="ChEBI" id="CHEBI:18420"/>
    </ligand>
</feature>
<feature type="binding site" evidence="1">
    <location>
        <position position="57"/>
    </location>
    <ligand>
        <name>ATP</name>
        <dbReference type="ChEBI" id="CHEBI:30616"/>
    </ligand>
</feature>
<feature type="binding site" evidence="1">
    <location>
        <position position="57"/>
    </location>
    <ligand>
        <name>Mg(2+)</name>
        <dbReference type="ChEBI" id="CHEBI:18420"/>
    </ligand>
</feature>
<feature type="binding site" evidence="1">
    <location>
        <begin position="118"/>
        <end position="121"/>
    </location>
    <ligand>
        <name>ATP</name>
        <dbReference type="ChEBI" id="CHEBI:30616"/>
    </ligand>
</feature>
<feature type="binding site" evidence="1">
    <location>
        <position position="118"/>
    </location>
    <ligand>
        <name>Mg(2+)</name>
        <dbReference type="ChEBI" id="CHEBI:18420"/>
    </ligand>
</feature>
<feature type="binding site" evidence="1">
    <location>
        <begin position="178"/>
        <end position="179"/>
    </location>
    <ligand>
        <name>ATP</name>
        <dbReference type="ChEBI" id="CHEBI:30616"/>
    </ligand>
</feature>
<proteinExistence type="inferred from homology"/>
<name>BIOD_BURMA</name>
<dbReference type="EC" id="6.3.3.3" evidence="1"/>
<dbReference type="EMBL" id="CP000010">
    <property type="protein sequence ID" value="AAU48656.1"/>
    <property type="molecule type" value="Genomic_DNA"/>
</dbReference>
<dbReference type="RefSeq" id="WP_004189380.1">
    <property type="nucleotide sequence ID" value="NC_006348.1"/>
</dbReference>
<dbReference type="RefSeq" id="YP_101947.1">
    <property type="nucleotide sequence ID" value="NC_006348.1"/>
</dbReference>
<dbReference type="SMR" id="Q62MX0"/>
<dbReference type="GeneID" id="92977885"/>
<dbReference type="KEGG" id="bma:BMA0102"/>
<dbReference type="PATRIC" id="fig|243160.12.peg.101"/>
<dbReference type="eggNOG" id="COG0132">
    <property type="taxonomic scope" value="Bacteria"/>
</dbReference>
<dbReference type="HOGENOM" id="CLU_072551_0_0_4"/>
<dbReference type="UniPathway" id="UPA00078">
    <property type="reaction ID" value="UER00161"/>
</dbReference>
<dbReference type="Proteomes" id="UP000006693">
    <property type="component" value="Chromosome 1"/>
</dbReference>
<dbReference type="GO" id="GO:0005829">
    <property type="term" value="C:cytosol"/>
    <property type="evidence" value="ECO:0007669"/>
    <property type="project" value="TreeGrafter"/>
</dbReference>
<dbReference type="GO" id="GO:0005524">
    <property type="term" value="F:ATP binding"/>
    <property type="evidence" value="ECO:0007669"/>
    <property type="project" value="UniProtKB-UniRule"/>
</dbReference>
<dbReference type="GO" id="GO:0004141">
    <property type="term" value="F:dethiobiotin synthase activity"/>
    <property type="evidence" value="ECO:0007669"/>
    <property type="project" value="UniProtKB-UniRule"/>
</dbReference>
<dbReference type="GO" id="GO:0000287">
    <property type="term" value="F:magnesium ion binding"/>
    <property type="evidence" value="ECO:0007669"/>
    <property type="project" value="UniProtKB-UniRule"/>
</dbReference>
<dbReference type="GO" id="GO:0009102">
    <property type="term" value="P:biotin biosynthetic process"/>
    <property type="evidence" value="ECO:0007669"/>
    <property type="project" value="UniProtKB-UniRule"/>
</dbReference>
<dbReference type="CDD" id="cd03109">
    <property type="entry name" value="DTBS"/>
    <property type="match status" value="1"/>
</dbReference>
<dbReference type="FunFam" id="3.40.50.300:FF:000292">
    <property type="entry name" value="ATP-dependent dethiobiotin synthetase BioD"/>
    <property type="match status" value="1"/>
</dbReference>
<dbReference type="Gene3D" id="3.40.50.300">
    <property type="entry name" value="P-loop containing nucleotide triphosphate hydrolases"/>
    <property type="match status" value="1"/>
</dbReference>
<dbReference type="HAMAP" id="MF_00336">
    <property type="entry name" value="BioD"/>
    <property type="match status" value="1"/>
</dbReference>
<dbReference type="InterPro" id="IPR004472">
    <property type="entry name" value="DTB_synth_BioD"/>
</dbReference>
<dbReference type="InterPro" id="IPR027417">
    <property type="entry name" value="P-loop_NTPase"/>
</dbReference>
<dbReference type="NCBIfam" id="TIGR00347">
    <property type="entry name" value="bioD"/>
    <property type="match status" value="1"/>
</dbReference>
<dbReference type="PANTHER" id="PTHR43210">
    <property type="entry name" value="DETHIOBIOTIN SYNTHETASE"/>
    <property type="match status" value="1"/>
</dbReference>
<dbReference type="PANTHER" id="PTHR43210:SF5">
    <property type="entry name" value="DETHIOBIOTIN SYNTHETASE"/>
    <property type="match status" value="1"/>
</dbReference>
<dbReference type="Pfam" id="PF13500">
    <property type="entry name" value="AAA_26"/>
    <property type="match status" value="1"/>
</dbReference>
<dbReference type="PIRSF" id="PIRSF006755">
    <property type="entry name" value="DTB_synth"/>
    <property type="match status" value="1"/>
</dbReference>
<dbReference type="SUPFAM" id="SSF52540">
    <property type="entry name" value="P-loop containing nucleoside triphosphate hydrolases"/>
    <property type="match status" value="1"/>
</dbReference>
<sequence length="240" mass="24874">MSAPLSLFVTGTDTEIGKTFVSAALLHGFARAGLRAAAMKPVAAGAYERDGAWRNEDADQLDAAANVALPAAIRTPFLLKAPAAPHIVAAREGVALDIGTIVDAHRRACEMADVIVVEGVGGVRVPLADTRDTADLAVALGLPVVLVVGVRLGCISHALLTAEAIAARGLPLAGWVANRIDPAMPFADDNIDTLRAWLEREHRAPLLGALAHMSPPSPDAASHALDVNLLLNALRAAAPR</sequence>